<protein>
    <recommendedName>
        <fullName>Putative MgpC-like protein MPN_150</fullName>
    </recommendedName>
</protein>
<sequence>MGSNAVPSLWYWVVDERTTSGRGTWWAHTELNWGTDKQKEFVENQLGFNETSATDSHNFKKALLHQPAYLISGLDVVADHLVFAAFRAGAVGYDMTTDTNASTYNQALTWSTTAGLDSAGGYKALVENTAGLNGPINGLFTLLDTFAYVTPVSGMKGGSKNTEAVQTTYPVKSDQKASAKIASLINASPLNSYGDKKSHPPKVKGRQLQNIFDDWKLTKAVSLM</sequence>
<dbReference type="EMBL" id="U00089">
    <property type="protein sequence ID" value="AAB95652.1"/>
    <property type="molecule type" value="Genomic_DNA"/>
</dbReference>
<dbReference type="PIR" id="S73330">
    <property type="entry name" value="S73330"/>
</dbReference>
<dbReference type="RefSeq" id="NP_109838.1">
    <property type="nucleotide sequence ID" value="NC_000912.1"/>
</dbReference>
<dbReference type="SMR" id="P75036"/>
<dbReference type="EnsemblBacteria" id="AAB95652">
    <property type="protein sequence ID" value="AAB95652"/>
    <property type="gene ID" value="MPN_150"/>
</dbReference>
<dbReference type="KEGG" id="mpn:MPN_150"/>
<dbReference type="PATRIC" id="fig|272634.6.peg.166"/>
<dbReference type="HOGENOM" id="CLU_1233906_0_0_14"/>
<dbReference type="OrthoDB" id="403469at2"/>
<dbReference type="BioCyc" id="MPNE272634:G1GJ3-253-MONOMER"/>
<dbReference type="Proteomes" id="UP000000808">
    <property type="component" value="Chromosome"/>
</dbReference>
<dbReference type="InterPro" id="IPR007885">
    <property type="entry name" value="MgpC"/>
</dbReference>
<dbReference type="Pfam" id="PF05220">
    <property type="entry name" value="MgpC"/>
    <property type="match status" value="1"/>
</dbReference>
<proteinExistence type="uncertain"/>
<organism>
    <name type="scientific">Mycoplasma pneumoniae (strain ATCC 29342 / M129 / Subtype 1)</name>
    <name type="common">Mycoplasmoides pneumoniae</name>
    <dbReference type="NCBI Taxonomy" id="272634"/>
    <lineage>
        <taxon>Bacteria</taxon>
        <taxon>Bacillati</taxon>
        <taxon>Mycoplasmatota</taxon>
        <taxon>Mycoplasmoidales</taxon>
        <taxon>Mycoplasmoidaceae</taxon>
        <taxon>Mycoplasmoides</taxon>
    </lineage>
</organism>
<gene>
    <name type="ordered locus">MPN_150</name>
    <name type="ORF">E07_orf224</name>
    <name type="ORF">MP004</name>
</gene>
<comment type="similarity">
    <text evidence="1">Belongs to the MgpC family.</text>
</comment>
<comment type="caution">
    <text evidence="1">Could be the product of a pseudogene.</text>
</comment>
<reference key="1">
    <citation type="journal article" date="1996" name="Nucleic Acids Res.">
        <title>Complete sequence analysis of the genome of the bacterium Mycoplasma pneumoniae.</title>
        <authorList>
            <person name="Himmelreich R."/>
            <person name="Hilbert H."/>
            <person name="Plagens H."/>
            <person name="Pirkl E."/>
            <person name="Li B.-C."/>
            <person name="Herrmann R."/>
        </authorList>
    </citation>
    <scope>NUCLEOTIDE SEQUENCE [LARGE SCALE GENOMIC DNA]</scope>
    <source>
        <strain>ATCC 29342 / M129 / Subtype 1</strain>
    </source>
</reference>
<name>Y150_MYCPN</name>
<evidence type="ECO:0000305" key="1"/>
<feature type="chain" id="PRO_0000210721" description="Putative MgpC-like protein MPN_150">
    <location>
        <begin position="1"/>
        <end position="224"/>
    </location>
</feature>
<keyword id="KW-1185">Reference proteome</keyword>
<accession>P75036</accession>